<feature type="chain" id="PRO_0000460306" description="Group 2 truncated hemoglobin 3-2">
    <location>
        <begin position="1"/>
        <end position="169"/>
    </location>
</feature>
<feature type="binding site" description="proximal binding residue" evidence="2">
    <location>
        <position position="99"/>
    </location>
    <ligand>
        <name>heme b</name>
        <dbReference type="ChEBI" id="CHEBI:60344"/>
    </ligand>
    <ligandPart>
        <name>Fe</name>
        <dbReference type="ChEBI" id="CHEBI:18248"/>
    </ligandPart>
</feature>
<reference key="1">
    <citation type="submission" date="2012-05" db="EMBL/GenBank/DDBJ databases">
        <authorList>
            <person name="Krishnakumar V."/>
            <person name="Cheung F."/>
            <person name="Xiao Y."/>
            <person name="Chan A."/>
            <person name="Moskal W.A."/>
            <person name="Town C.D."/>
        </authorList>
    </citation>
    <scope>NUCLEOTIDE SEQUENCE [MRNA]</scope>
</reference>
<reference key="2">
    <citation type="journal article" date="2011" name="Nature">
        <title>The Medicago genome provides insight into the evolution of rhizobial symbioses.</title>
        <authorList>
            <person name="Young N.D."/>
            <person name="Debelle F."/>
            <person name="Oldroyd G.E.D."/>
            <person name="Geurts R."/>
            <person name="Cannon S.B."/>
            <person name="Udvardi M.K."/>
            <person name="Benedito V.A."/>
            <person name="Mayer K.F.X."/>
            <person name="Gouzy J."/>
            <person name="Schoof H."/>
            <person name="Van de Peer Y."/>
            <person name="Proost S."/>
            <person name="Cook D.R."/>
            <person name="Meyers B.C."/>
            <person name="Spannagl M."/>
            <person name="Cheung F."/>
            <person name="De Mita S."/>
            <person name="Krishnakumar V."/>
            <person name="Gundlach H."/>
            <person name="Zhou S."/>
            <person name="Mudge J."/>
            <person name="Bharti A.K."/>
            <person name="Murray J.D."/>
            <person name="Naoumkina M.A."/>
            <person name="Rosen B."/>
            <person name="Silverstein K.A.T."/>
            <person name="Tang H."/>
            <person name="Rombauts S."/>
            <person name="Zhao P.X."/>
            <person name="Zhou P."/>
            <person name="Barbe V."/>
            <person name="Bardou P."/>
            <person name="Bechner M."/>
            <person name="Bellec A."/>
            <person name="Berger A."/>
            <person name="Berges H."/>
            <person name="Bidwell S."/>
            <person name="Bisseling T."/>
            <person name="Choisne N."/>
            <person name="Couloux A."/>
            <person name="Denny R."/>
            <person name="Deshpande S."/>
            <person name="Dai X."/>
            <person name="Doyle J.J."/>
            <person name="Dudez A.-M."/>
            <person name="Farmer A.D."/>
            <person name="Fouteau S."/>
            <person name="Franken C."/>
            <person name="Gibelin C."/>
            <person name="Gish J."/>
            <person name="Goldstein S."/>
            <person name="Gonzalez A.J."/>
            <person name="Green P.J."/>
            <person name="Hallab A."/>
            <person name="Hartog M."/>
            <person name="Hua A."/>
            <person name="Humphray S.J."/>
            <person name="Jeong D.-H."/>
            <person name="Jing Y."/>
            <person name="Jocker A."/>
            <person name="Kenton S.M."/>
            <person name="Kim D.-J."/>
            <person name="Klee K."/>
            <person name="Lai H."/>
            <person name="Lang C."/>
            <person name="Lin S."/>
            <person name="Macmil S.L."/>
            <person name="Magdelenat G."/>
            <person name="Matthews L."/>
            <person name="McCorrison J."/>
            <person name="Monaghan E.L."/>
            <person name="Mun J.-H."/>
            <person name="Najar F.Z."/>
            <person name="Nicholson C."/>
            <person name="Noirot C."/>
            <person name="O'Bleness M."/>
            <person name="Paule C.R."/>
            <person name="Poulain J."/>
            <person name="Prion F."/>
            <person name="Qin B."/>
            <person name="Qu C."/>
            <person name="Retzel E.F."/>
            <person name="Riddle C."/>
            <person name="Sallet E."/>
            <person name="Samain S."/>
            <person name="Samson N."/>
            <person name="Sanders I."/>
            <person name="Saurat O."/>
            <person name="Scarpelli C."/>
            <person name="Schiex T."/>
            <person name="Segurens B."/>
            <person name="Severin A.J."/>
            <person name="Sherrier D.J."/>
            <person name="Shi R."/>
            <person name="Sims S."/>
            <person name="Singer S.R."/>
            <person name="Sinharoy S."/>
            <person name="Sterck L."/>
            <person name="Viollet A."/>
            <person name="Wang B.-B."/>
            <person name="Wang K."/>
            <person name="Wang M."/>
            <person name="Wang X."/>
            <person name="Warfsmann J."/>
            <person name="Weissenbach J."/>
            <person name="White D.D."/>
            <person name="White J.D."/>
            <person name="Wiley G.B."/>
            <person name="Wincker P."/>
            <person name="Xing Y."/>
            <person name="Yang L."/>
            <person name="Yao Z."/>
            <person name="Ying F."/>
            <person name="Zhai J."/>
            <person name="Zhou L."/>
            <person name="Zuber A."/>
            <person name="Denarie J."/>
            <person name="Dixon R.A."/>
            <person name="May G.D."/>
            <person name="Schwartz D.C."/>
            <person name="Rogers J."/>
            <person name="Quetier F."/>
            <person name="Town C.D."/>
            <person name="Roe B.A."/>
        </authorList>
    </citation>
    <scope>NUCLEOTIDE SEQUENCE [LARGE SCALE GENOMIC DNA]</scope>
    <source>
        <strain>cv. Jemalong A17</strain>
    </source>
</reference>
<reference key="3">
    <citation type="journal article" date="2014" name="BMC Genomics">
        <title>An improved genome release (version Mt4.0) for the model legume Medicago truncatula.</title>
        <authorList>
            <person name="Tang H."/>
            <person name="Krishnakumar V."/>
            <person name="Bidwell S."/>
            <person name="Rosen B."/>
            <person name="Chan A."/>
            <person name="Zhou S."/>
            <person name="Gentzbittel L."/>
            <person name="Childs K.L."/>
            <person name="Yandell M."/>
            <person name="Gundlach H."/>
            <person name="Mayer K.F."/>
            <person name="Schwartz D.C."/>
            <person name="Town C.D."/>
        </authorList>
    </citation>
    <scope>GENOME REANNOTATION</scope>
    <source>
        <strain>cv. Jemalong A17</strain>
    </source>
</reference>
<reference key="4">
    <citation type="journal article" date="2018" name="Nat. Plants">
        <title>Whole-genome landscape of Medicago truncatula symbiotic genes.</title>
        <authorList>
            <person name="Pecrix Y."/>
            <person name="Staton S.E."/>
            <person name="Sallet E."/>
            <person name="Lelandais-Briere C."/>
            <person name="Moreau S."/>
            <person name="Carrere S."/>
            <person name="Blein T."/>
            <person name="Jardinaud M.F."/>
            <person name="Latrasse D."/>
            <person name="Zouine M."/>
            <person name="Zahm M."/>
            <person name="Kreplak J."/>
            <person name="Mayjonade B."/>
            <person name="Satge C."/>
            <person name="Perez M."/>
            <person name="Cauet S."/>
            <person name="Marande W."/>
            <person name="Chantry-Darmon C."/>
            <person name="Lopez-Roques C."/>
            <person name="Bouchez O."/>
            <person name="Berard A."/>
            <person name="Debelle F."/>
            <person name="Munos S."/>
            <person name="Bendahmane A."/>
            <person name="Berges H."/>
            <person name="Niebel A."/>
            <person name="Buitink J."/>
            <person name="Frugier F."/>
            <person name="Benhamed M."/>
            <person name="Crespi M."/>
            <person name="Gouzy J."/>
            <person name="Gamas P."/>
        </authorList>
    </citation>
    <scope>NUCLEOTIDE SEQUENCE [LARGE SCALE GENOMIC DNA]</scope>
    <source>
        <strain>cv. Jemalong A17</strain>
        <tissue>Leaf</tissue>
    </source>
</reference>
<reference key="5">
    <citation type="journal article" date="2020" name="New Phytol.">
        <title>Medicago truncatula Phytoglobin 1.1 controls symbiotic nodulation and nitrogen fixation via the regulation of nitric oxide concentration.</title>
        <authorList>
            <person name="Berger A."/>
            <person name="Guinand S."/>
            <person name="Boscari A."/>
            <person name="Puppo A."/>
            <person name="Brouquisse R."/>
        </authorList>
    </citation>
    <scope>DEVELOPMENTAL STAGE</scope>
    <scope>REPRESSION BY NITRIC OXIDE</scope>
    <scope>GENE FAMILY</scope>
    <scope>NOMENCLATURE</scope>
    <source>
        <strain>cv. Jemalong A17</strain>
    </source>
</reference>
<sequence>MQSLQQKASEWSGVSTDEAFSIDETNLFQKLGLQTFINLSTNFYNRVYDDEEEEWFRSIFANSKKEEAIQNQYEFFVQRMGGPPLFSQRRGHPALIGRHQPFPVTHQAAERWLHHMQLALDTTPDIDDDSKIKMMNFFRHTAYFLVAGDELKNPNQQIPCKHAAGKDNS</sequence>
<keyword id="KW-0349">Heme</keyword>
<keyword id="KW-0408">Iron</keyword>
<keyword id="KW-0479">Metal-binding</keyword>
<keyword id="KW-0536">Nodulation</keyword>
<keyword id="KW-0561">Oxygen transport</keyword>
<keyword id="KW-1185">Reference proteome</keyword>
<keyword id="KW-0813">Transport</keyword>
<protein>
    <recommendedName>
        <fullName evidence="6">Group 2 truncated hemoglobin 3-2</fullName>
        <shortName evidence="4">MtGlb3-2</shortName>
    </recommendedName>
    <alternativeName>
        <fullName evidence="6">Phytoglobin 3.2</fullName>
        <shortName evidence="6">Phytogb3.2</shortName>
    </alternativeName>
    <alternativeName>
        <fullName evidence="6">Two-on-two hemoglobin 3-2</fullName>
        <shortName evidence="6">2-on-2 hemoglobin 3-2</shortName>
    </alternativeName>
</protein>
<organism>
    <name type="scientific">Medicago truncatula</name>
    <name type="common">Barrel medic</name>
    <name type="synonym">Medicago tribuloides</name>
    <dbReference type="NCBI Taxonomy" id="3880"/>
    <lineage>
        <taxon>Eukaryota</taxon>
        <taxon>Viridiplantae</taxon>
        <taxon>Streptophyta</taxon>
        <taxon>Embryophyta</taxon>
        <taxon>Tracheophyta</taxon>
        <taxon>Spermatophyta</taxon>
        <taxon>Magnoliopsida</taxon>
        <taxon>eudicotyledons</taxon>
        <taxon>Gunneridae</taxon>
        <taxon>Pentapetalae</taxon>
        <taxon>rosids</taxon>
        <taxon>fabids</taxon>
        <taxon>Fabales</taxon>
        <taxon>Fabaceae</taxon>
        <taxon>Papilionoideae</taxon>
        <taxon>50 kb inversion clade</taxon>
        <taxon>NPAAA clade</taxon>
        <taxon>Hologalegina</taxon>
        <taxon>IRL clade</taxon>
        <taxon>Trifolieae</taxon>
        <taxon>Medicago</taxon>
    </lineage>
</organism>
<name>GLB32_MEDTR</name>
<dbReference type="EMBL" id="BT141322">
    <property type="protein sequence ID" value="AFK41116.1"/>
    <property type="molecule type" value="mRNA"/>
</dbReference>
<dbReference type="EMBL" id="CM001217">
    <property type="protein sequence ID" value="AES58822.2"/>
    <property type="molecule type" value="Genomic_DNA"/>
</dbReference>
<dbReference type="EMBL" id="PSQE01000001">
    <property type="protein sequence ID" value="RHN76762.1"/>
    <property type="molecule type" value="Genomic_DNA"/>
</dbReference>
<dbReference type="SMR" id="G7I4F4"/>
<dbReference type="STRING" id="3880.G7I4F4"/>
<dbReference type="PaxDb" id="3880-AES58822"/>
<dbReference type="EnsemblPlants" id="rna135">
    <property type="protein sequence ID" value="RHN76762.1"/>
    <property type="gene ID" value="gene135"/>
</dbReference>
<dbReference type="GeneID" id="11432822"/>
<dbReference type="Gramene" id="rna135">
    <property type="protein sequence ID" value="RHN76762.1"/>
    <property type="gene ID" value="gene135"/>
</dbReference>
<dbReference type="KEGG" id="mtr:11432822"/>
<dbReference type="eggNOG" id="ENOG502QRXE">
    <property type="taxonomic scope" value="Eukaryota"/>
</dbReference>
<dbReference type="HOGENOM" id="CLU_103526_0_0_1"/>
<dbReference type="OrthoDB" id="1856542at2759"/>
<dbReference type="Proteomes" id="UP000002051">
    <property type="component" value="Chromosome 1"/>
</dbReference>
<dbReference type="Proteomes" id="UP000265566">
    <property type="component" value="Chromosome 1"/>
</dbReference>
<dbReference type="GO" id="GO:0020037">
    <property type="term" value="F:heme binding"/>
    <property type="evidence" value="ECO:0007669"/>
    <property type="project" value="InterPro"/>
</dbReference>
<dbReference type="GO" id="GO:0046872">
    <property type="term" value="F:metal ion binding"/>
    <property type="evidence" value="ECO:0007669"/>
    <property type="project" value="UniProtKB-KW"/>
</dbReference>
<dbReference type="GO" id="GO:0019825">
    <property type="term" value="F:oxygen binding"/>
    <property type="evidence" value="ECO:0007669"/>
    <property type="project" value="InterPro"/>
</dbReference>
<dbReference type="GO" id="GO:0005344">
    <property type="term" value="F:oxygen carrier activity"/>
    <property type="evidence" value="ECO:0007669"/>
    <property type="project" value="UniProtKB-KW"/>
</dbReference>
<dbReference type="GO" id="GO:0009877">
    <property type="term" value="P:nodulation"/>
    <property type="evidence" value="ECO:0007669"/>
    <property type="project" value="UniProtKB-KW"/>
</dbReference>
<dbReference type="GO" id="GO:0071731">
    <property type="term" value="P:response to nitric oxide"/>
    <property type="evidence" value="ECO:0000270"/>
    <property type="project" value="UniProtKB"/>
</dbReference>
<dbReference type="CDD" id="cd19755">
    <property type="entry name" value="TrHb2_AtGlb3-like_O"/>
    <property type="match status" value="1"/>
</dbReference>
<dbReference type="Gene3D" id="1.10.490.10">
    <property type="entry name" value="Globins"/>
    <property type="match status" value="1"/>
</dbReference>
<dbReference type="InterPro" id="IPR044203">
    <property type="entry name" value="GlbO/GLB3-like"/>
</dbReference>
<dbReference type="InterPro" id="IPR009050">
    <property type="entry name" value="Globin-like_sf"/>
</dbReference>
<dbReference type="InterPro" id="IPR012292">
    <property type="entry name" value="Globin/Proto"/>
</dbReference>
<dbReference type="InterPro" id="IPR001486">
    <property type="entry name" value="Hemoglobin_trunc"/>
</dbReference>
<dbReference type="PANTHER" id="PTHR47366">
    <property type="entry name" value="TWO-ON-TWO HEMOGLOBIN-3"/>
    <property type="match status" value="1"/>
</dbReference>
<dbReference type="PANTHER" id="PTHR47366:SF1">
    <property type="entry name" value="TWO-ON-TWO HEMOGLOBIN-3"/>
    <property type="match status" value="1"/>
</dbReference>
<dbReference type="Pfam" id="PF01152">
    <property type="entry name" value="Bac_globin"/>
    <property type="match status" value="1"/>
</dbReference>
<dbReference type="SUPFAM" id="SSF46458">
    <property type="entry name" value="Globin-like"/>
    <property type="match status" value="1"/>
</dbReference>
<evidence type="ECO:0000250" key="1">
    <source>
        <dbReference type="UniProtKB" id="I3SAV1"/>
    </source>
</evidence>
<evidence type="ECO:0000250" key="2">
    <source>
        <dbReference type="UniProtKB" id="Q67XG0"/>
    </source>
</evidence>
<evidence type="ECO:0000269" key="3">
    <source>
    </source>
</evidence>
<evidence type="ECO:0000303" key="4">
    <source>
    </source>
</evidence>
<evidence type="ECO:0000305" key="5"/>
<evidence type="ECO:0000305" key="6">
    <source>
    </source>
</evidence>
<evidence type="ECO:0000312" key="7">
    <source>
        <dbReference type="EMBL" id="AES58822.2"/>
    </source>
</evidence>
<evidence type="ECO:0000312" key="8">
    <source>
        <dbReference type="EMBL" id="RHN76762.1"/>
    </source>
</evidence>
<accession>G7I4F4</accession>
<accession>A0A0C3UI86</accession>
<accession>I3SLH4</accession>
<gene>
    <name evidence="4" type="primary">GLB3-2</name>
    <name evidence="7" type="ordered locus">MTR_1g008700</name>
    <name evidence="8" type="ordered locus">MtrunA17_Chr1g0147401</name>
</gene>
<comment type="function">
    <text evidence="1 2">Hemoglobin-like protein that exhibits an unusual concentration-independent binding of O(2) and CO (By similarity). Required for general plant development and during nodulation (By similarity). May promote shoot organogenesis from root explants (By similarity).</text>
</comment>
<comment type="subunit">
    <text evidence="2">Homodimer when ferric.</text>
</comment>
<comment type="developmental stage">
    <text evidence="3">During root nodulation, accumulates progressively and later stays stable until nodule senescence.</text>
</comment>
<comment type="induction">
    <text evidence="3">Down-regulated by nitric oxide (NO), particularly during nodulation mediated by Sinorhizobium meliloti inoculation.</text>
</comment>
<comment type="similarity">
    <text evidence="5">Belongs to the truncated hemoglobin family. Group II subfamily.</text>
</comment>
<proteinExistence type="evidence at transcript level"/>